<name>TSAD_CLOBL</name>
<accession>A7GIP8</accession>
<gene>
    <name evidence="1" type="primary">tsaD</name>
    <name type="synonym">gcp</name>
    <name type="ordered locus">CLI_3483</name>
</gene>
<keyword id="KW-0012">Acyltransferase</keyword>
<keyword id="KW-0963">Cytoplasm</keyword>
<keyword id="KW-0408">Iron</keyword>
<keyword id="KW-0479">Metal-binding</keyword>
<keyword id="KW-0808">Transferase</keyword>
<keyword id="KW-0819">tRNA processing</keyword>
<sequence>MKESINILAIESSCDETSAAVVVNGREVLSNIIASQISTHEKFGGVVPEVASRKHIEVISAVVQEALDEANFTLDDIDAIGVTYGPGLVGALLVGLQYAKGLAFATGKPLIGVNHIEGHISANFIEYKDLKPPFMCLVVSGGHTFIVYMKDYGEFEVLGETRDDAAGEAFDKVARAIGLGYPGGPKIDKISKEGNEEAIKFPRANFHNDTLDFSFSGIKSAVLNYLNKKEMKGEEINKADVAASFQKSVVDVLVDNTIKACMSKKVDKIAVAGGVASNSCLRETLVRECKKKGIEVLIPPFILCTDNAAMIGSAAYFEYIKGRRTSLDINAVPNLKLGER</sequence>
<evidence type="ECO:0000255" key="1">
    <source>
        <dbReference type="HAMAP-Rule" id="MF_01445"/>
    </source>
</evidence>
<dbReference type="EC" id="2.3.1.234" evidence="1"/>
<dbReference type="EMBL" id="CP000728">
    <property type="protein sequence ID" value="ABS40039.1"/>
    <property type="molecule type" value="Genomic_DNA"/>
</dbReference>
<dbReference type="RefSeq" id="WP_003357496.1">
    <property type="nucleotide sequence ID" value="NC_009699.1"/>
</dbReference>
<dbReference type="SMR" id="A7GIP8"/>
<dbReference type="GeneID" id="5184329"/>
<dbReference type="KEGG" id="cbf:CLI_3483"/>
<dbReference type="HOGENOM" id="CLU_023208_0_2_9"/>
<dbReference type="Proteomes" id="UP000002410">
    <property type="component" value="Chromosome"/>
</dbReference>
<dbReference type="GO" id="GO:0005737">
    <property type="term" value="C:cytoplasm"/>
    <property type="evidence" value="ECO:0007669"/>
    <property type="project" value="UniProtKB-SubCell"/>
</dbReference>
<dbReference type="GO" id="GO:0005506">
    <property type="term" value="F:iron ion binding"/>
    <property type="evidence" value="ECO:0007669"/>
    <property type="project" value="UniProtKB-UniRule"/>
</dbReference>
<dbReference type="GO" id="GO:0061711">
    <property type="term" value="F:N(6)-L-threonylcarbamoyladenine synthase activity"/>
    <property type="evidence" value="ECO:0007669"/>
    <property type="project" value="UniProtKB-EC"/>
</dbReference>
<dbReference type="GO" id="GO:0002949">
    <property type="term" value="P:tRNA threonylcarbamoyladenosine modification"/>
    <property type="evidence" value="ECO:0007669"/>
    <property type="project" value="UniProtKB-UniRule"/>
</dbReference>
<dbReference type="CDD" id="cd24133">
    <property type="entry name" value="ASKHA_NBD_TsaD_bac"/>
    <property type="match status" value="1"/>
</dbReference>
<dbReference type="FunFam" id="3.30.420.40:FF:000012">
    <property type="entry name" value="tRNA N6-adenosine threonylcarbamoyltransferase"/>
    <property type="match status" value="1"/>
</dbReference>
<dbReference type="FunFam" id="3.30.420.40:FF:000040">
    <property type="entry name" value="tRNA N6-adenosine threonylcarbamoyltransferase"/>
    <property type="match status" value="1"/>
</dbReference>
<dbReference type="Gene3D" id="3.30.420.40">
    <property type="match status" value="2"/>
</dbReference>
<dbReference type="HAMAP" id="MF_01445">
    <property type="entry name" value="TsaD"/>
    <property type="match status" value="1"/>
</dbReference>
<dbReference type="InterPro" id="IPR043129">
    <property type="entry name" value="ATPase_NBD"/>
</dbReference>
<dbReference type="InterPro" id="IPR000905">
    <property type="entry name" value="Gcp-like_dom"/>
</dbReference>
<dbReference type="InterPro" id="IPR017861">
    <property type="entry name" value="KAE1/TsaD"/>
</dbReference>
<dbReference type="InterPro" id="IPR022450">
    <property type="entry name" value="TsaD"/>
</dbReference>
<dbReference type="NCBIfam" id="TIGR00329">
    <property type="entry name" value="gcp_kae1"/>
    <property type="match status" value="1"/>
</dbReference>
<dbReference type="NCBIfam" id="TIGR03723">
    <property type="entry name" value="T6A_TsaD_YgjD"/>
    <property type="match status" value="1"/>
</dbReference>
<dbReference type="PANTHER" id="PTHR11735">
    <property type="entry name" value="TRNA N6-ADENOSINE THREONYLCARBAMOYLTRANSFERASE"/>
    <property type="match status" value="1"/>
</dbReference>
<dbReference type="PANTHER" id="PTHR11735:SF6">
    <property type="entry name" value="TRNA N6-ADENOSINE THREONYLCARBAMOYLTRANSFERASE, MITOCHONDRIAL"/>
    <property type="match status" value="1"/>
</dbReference>
<dbReference type="Pfam" id="PF00814">
    <property type="entry name" value="TsaD"/>
    <property type="match status" value="1"/>
</dbReference>
<dbReference type="PRINTS" id="PR00789">
    <property type="entry name" value="OSIALOPTASE"/>
</dbReference>
<dbReference type="SUPFAM" id="SSF53067">
    <property type="entry name" value="Actin-like ATPase domain"/>
    <property type="match status" value="2"/>
</dbReference>
<reference key="1">
    <citation type="submission" date="2007-06" db="EMBL/GenBank/DDBJ databases">
        <authorList>
            <person name="Brinkac L.M."/>
            <person name="Daugherty S."/>
            <person name="Dodson R.J."/>
            <person name="Madupu R."/>
            <person name="Brown J.L."/>
            <person name="Bruce D."/>
            <person name="Detter C."/>
            <person name="Munk C."/>
            <person name="Smith L.A."/>
            <person name="Smith T.J."/>
            <person name="White O."/>
            <person name="Brettin T.S."/>
        </authorList>
    </citation>
    <scope>NUCLEOTIDE SEQUENCE [LARGE SCALE GENOMIC DNA]</scope>
    <source>
        <strain>Langeland / NCTC 10281 / Type F</strain>
    </source>
</reference>
<feature type="chain" id="PRO_1000024432" description="tRNA N6-adenosine threonylcarbamoyltransferase">
    <location>
        <begin position="1"/>
        <end position="340"/>
    </location>
</feature>
<feature type="binding site" evidence="1">
    <location>
        <position position="115"/>
    </location>
    <ligand>
        <name>Fe cation</name>
        <dbReference type="ChEBI" id="CHEBI:24875"/>
    </ligand>
</feature>
<feature type="binding site" evidence="1">
    <location>
        <position position="119"/>
    </location>
    <ligand>
        <name>Fe cation</name>
        <dbReference type="ChEBI" id="CHEBI:24875"/>
    </ligand>
</feature>
<feature type="binding site" evidence="1">
    <location>
        <begin position="138"/>
        <end position="142"/>
    </location>
    <ligand>
        <name>substrate</name>
    </ligand>
</feature>
<feature type="binding site" evidence="1">
    <location>
        <position position="171"/>
    </location>
    <ligand>
        <name>substrate</name>
    </ligand>
</feature>
<feature type="binding site" evidence="1">
    <location>
        <position position="184"/>
    </location>
    <ligand>
        <name>substrate</name>
    </ligand>
</feature>
<feature type="binding site" evidence="1">
    <location>
        <position position="188"/>
    </location>
    <ligand>
        <name>substrate</name>
    </ligand>
</feature>
<feature type="binding site" evidence="1">
    <location>
        <position position="278"/>
    </location>
    <ligand>
        <name>substrate</name>
    </ligand>
</feature>
<feature type="binding site" evidence="1">
    <location>
        <position position="306"/>
    </location>
    <ligand>
        <name>Fe cation</name>
        <dbReference type="ChEBI" id="CHEBI:24875"/>
    </ligand>
</feature>
<comment type="function">
    <text evidence="1">Required for the formation of a threonylcarbamoyl group on adenosine at position 37 (t(6)A37) in tRNAs that read codons beginning with adenine. Is involved in the transfer of the threonylcarbamoyl moiety of threonylcarbamoyl-AMP (TC-AMP) to the N6 group of A37, together with TsaE and TsaB. TsaD likely plays a direct catalytic role in this reaction.</text>
</comment>
<comment type="catalytic activity">
    <reaction evidence="1">
        <text>L-threonylcarbamoyladenylate + adenosine(37) in tRNA = N(6)-L-threonylcarbamoyladenosine(37) in tRNA + AMP + H(+)</text>
        <dbReference type="Rhea" id="RHEA:37059"/>
        <dbReference type="Rhea" id="RHEA-COMP:10162"/>
        <dbReference type="Rhea" id="RHEA-COMP:10163"/>
        <dbReference type="ChEBI" id="CHEBI:15378"/>
        <dbReference type="ChEBI" id="CHEBI:73682"/>
        <dbReference type="ChEBI" id="CHEBI:74411"/>
        <dbReference type="ChEBI" id="CHEBI:74418"/>
        <dbReference type="ChEBI" id="CHEBI:456215"/>
        <dbReference type="EC" id="2.3.1.234"/>
    </reaction>
</comment>
<comment type="cofactor">
    <cofactor evidence="1">
        <name>Fe(2+)</name>
        <dbReference type="ChEBI" id="CHEBI:29033"/>
    </cofactor>
    <text evidence="1">Binds 1 Fe(2+) ion per subunit.</text>
</comment>
<comment type="subcellular location">
    <subcellularLocation>
        <location evidence="1">Cytoplasm</location>
    </subcellularLocation>
</comment>
<comment type="similarity">
    <text evidence="1">Belongs to the KAE1 / TsaD family.</text>
</comment>
<protein>
    <recommendedName>
        <fullName evidence="1">tRNA N6-adenosine threonylcarbamoyltransferase</fullName>
        <ecNumber evidence="1">2.3.1.234</ecNumber>
    </recommendedName>
    <alternativeName>
        <fullName evidence="1">N6-L-threonylcarbamoyladenine synthase</fullName>
        <shortName evidence="1">t(6)A synthase</shortName>
    </alternativeName>
    <alternativeName>
        <fullName evidence="1">t(6)A37 threonylcarbamoyladenosine biosynthesis protein TsaD</fullName>
    </alternativeName>
    <alternativeName>
        <fullName evidence="1">tRNA threonylcarbamoyladenosine biosynthesis protein TsaD</fullName>
    </alternativeName>
</protein>
<proteinExistence type="inferred from homology"/>
<organism>
    <name type="scientific">Clostridium botulinum (strain Langeland / NCTC 10281 / Type F)</name>
    <dbReference type="NCBI Taxonomy" id="441772"/>
    <lineage>
        <taxon>Bacteria</taxon>
        <taxon>Bacillati</taxon>
        <taxon>Bacillota</taxon>
        <taxon>Clostridia</taxon>
        <taxon>Eubacteriales</taxon>
        <taxon>Clostridiaceae</taxon>
        <taxon>Clostridium</taxon>
    </lineage>
</organism>